<accession>Q5R4D7</accession>
<organism>
    <name type="scientific">Pongo abelii</name>
    <name type="common">Sumatran orangutan</name>
    <name type="synonym">Pongo pygmaeus abelii</name>
    <dbReference type="NCBI Taxonomy" id="9601"/>
    <lineage>
        <taxon>Eukaryota</taxon>
        <taxon>Metazoa</taxon>
        <taxon>Chordata</taxon>
        <taxon>Craniata</taxon>
        <taxon>Vertebrata</taxon>
        <taxon>Euteleostomi</taxon>
        <taxon>Mammalia</taxon>
        <taxon>Eutheria</taxon>
        <taxon>Euarchontoglires</taxon>
        <taxon>Primates</taxon>
        <taxon>Haplorrhini</taxon>
        <taxon>Catarrhini</taxon>
        <taxon>Hominidae</taxon>
        <taxon>Pongo</taxon>
    </lineage>
</organism>
<reference key="1">
    <citation type="submission" date="2004-11" db="EMBL/GenBank/DDBJ databases">
        <authorList>
            <consortium name="The German cDNA consortium"/>
        </authorList>
    </citation>
    <scope>NUCLEOTIDE SEQUENCE [LARGE SCALE MRNA]</scope>
    <source>
        <tissue>Brain cortex</tissue>
    </source>
</reference>
<keyword id="KW-0050">Antiport</keyword>
<keyword id="KW-0325">Glycoprotein</keyword>
<keyword id="KW-0333">Golgi apparatus</keyword>
<keyword id="KW-0472">Membrane</keyword>
<keyword id="KW-0597">Phosphoprotein</keyword>
<keyword id="KW-1185">Reference proteome</keyword>
<keyword id="KW-0762">Sugar transport</keyword>
<keyword id="KW-0812">Transmembrane</keyword>
<keyword id="KW-1133">Transmembrane helix</keyword>
<keyword id="KW-0813">Transport</keyword>
<dbReference type="EMBL" id="CR861314">
    <property type="protein sequence ID" value="CAH93379.1"/>
    <property type="molecule type" value="mRNA"/>
</dbReference>
<dbReference type="RefSeq" id="NP_001126985.1">
    <property type="nucleotide sequence ID" value="NM_001133513.1"/>
</dbReference>
<dbReference type="SMR" id="Q5R4D7"/>
<dbReference type="FunCoup" id="Q5R4D7">
    <property type="interactions" value="1292"/>
</dbReference>
<dbReference type="STRING" id="9601.ENSPPYP00000015147"/>
<dbReference type="GlyCosmos" id="Q5R4D7">
    <property type="glycosylation" value="1 site, No reported glycans"/>
</dbReference>
<dbReference type="GeneID" id="100174008"/>
<dbReference type="KEGG" id="pon:100174008"/>
<dbReference type="CTD" id="55032"/>
<dbReference type="eggNOG" id="KOG2234">
    <property type="taxonomic scope" value="Eukaryota"/>
</dbReference>
<dbReference type="InParanoid" id="Q5R4D7"/>
<dbReference type="OrthoDB" id="408493at2759"/>
<dbReference type="Proteomes" id="UP000001595">
    <property type="component" value="Unplaced"/>
</dbReference>
<dbReference type="GO" id="GO:0000139">
    <property type="term" value="C:Golgi membrane"/>
    <property type="evidence" value="ECO:0000250"/>
    <property type="project" value="UniProtKB"/>
</dbReference>
<dbReference type="GO" id="GO:0015297">
    <property type="term" value="F:antiporter activity"/>
    <property type="evidence" value="ECO:0007669"/>
    <property type="project" value="UniProtKB-KW"/>
</dbReference>
<dbReference type="GO" id="GO:0015165">
    <property type="term" value="F:pyrimidine nucleotide-sugar transmembrane transporter activity"/>
    <property type="evidence" value="ECO:0000250"/>
    <property type="project" value="UniProtKB"/>
</dbReference>
<dbReference type="InterPro" id="IPR007271">
    <property type="entry name" value="Nuc_sug_transpt"/>
</dbReference>
<dbReference type="NCBIfam" id="TIGR00803">
    <property type="entry name" value="nst"/>
    <property type="match status" value="1"/>
</dbReference>
<dbReference type="PANTHER" id="PTHR10231">
    <property type="entry name" value="NUCLEOTIDE-SUGAR TRANSMEMBRANE TRANSPORTER"/>
    <property type="match status" value="1"/>
</dbReference>
<dbReference type="Pfam" id="PF04142">
    <property type="entry name" value="Nuc_sug_transp"/>
    <property type="match status" value="1"/>
</dbReference>
<dbReference type="PIRSF" id="PIRSF005799">
    <property type="entry name" value="UDP-gal_transpt"/>
    <property type="match status" value="1"/>
</dbReference>
<dbReference type="SUPFAM" id="SSF103481">
    <property type="entry name" value="Multidrug resistance efflux transporter EmrE"/>
    <property type="match status" value="1"/>
</dbReference>
<name>S35A5_PONAB</name>
<proteinExistence type="evidence at transcript level"/>
<comment type="function">
    <text evidence="1">Probable UDP-sugar:UMP transmembrane antiporter involved in UDP-alpha-D-glucuronate/UDP-GlcA, UDP-GlcNAc/UDP-N-acetyl-alpha-D-glucosamine and UDP-N-acetyl-alpha-D-galactosamine/UDP-GalNAc transport from the cytosol to the lumen of the Golgi.</text>
</comment>
<comment type="catalytic activity">
    <reaction evidence="1">
        <text>UMP(out) + UDP-alpha-D-glucuronate(in) = UMP(in) + UDP-alpha-D-glucuronate(out)</text>
        <dbReference type="Rhea" id="RHEA:72727"/>
        <dbReference type="ChEBI" id="CHEBI:57865"/>
        <dbReference type="ChEBI" id="CHEBI:58052"/>
    </reaction>
</comment>
<comment type="catalytic activity">
    <reaction evidence="1">
        <text>UMP(out) + UDP-N-acetyl-alpha-D-glucosamine(in) = UMP(in) + UDP-N-acetyl-alpha-D-glucosamine(out)</text>
        <dbReference type="Rhea" id="RHEA:72695"/>
        <dbReference type="ChEBI" id="CHEBI:57705"/>
        <dbReference type="ChEBI" id="CHEBI:57865"/>
    </reaction>
</comment>
<comment type="catalytic activity">
    <reaction evidence="1">
        <text>UDP-N-acetyl-alpha-D-galactosamine(in) + UMP(out) = UDP-N-acetyl-alpha-D-galactosamine(out) + UMP(in)</text>
        <dbReference type="Rhea" id="RHEA:72735"/>
        <dbReference type="ChEBI" id="CHEBI:57865"/>
        <dbReference type="ChEBI" id="CHEBI:67138"/>
    </reaction>
</comment>
<comment type="subunit">
    <text evidence="1">Probably forms homooligomers and heterooligomers with SLC35A1, SLC35A2, SLC35A3 and SLC35A4.</text>
</comment>
<comment type="subcellular location">
    <subcellularLocation>
        <location evidence="1">Golgi apparatus membrane</location>
        <topology evidence="2">Multi-pass membrane protein</topology>
    </subcellularLocation>
</comment>
<comment type="similarity">
    <text evidence="4">Belongs to the nucleotide-sugar transporter family. SLC35A subfamily.</text>
</comment>
<protein>
    <recommendedName>
        <fullName evidence="1">UDP-sugar transporter protein SLC35A5</fullName>
    </recommendedName>
    <alternativeName>
        <fullName evidence="1">Solute carrier family 35 member A5</fullName>
    </alternativeName>
</protein>
<evidence type="ECO:0000250" key="1">
    <source>
        <dbReference type="UniProtKB" id="Q9BS91"/>
    </source>
</evidence>
<evidence type="ECO:0000255" key="2"/>
<evidence type="ECO:0000256" key="3">
    <source>
        <dbReference type="SAM" id="MobiDB-lite"/>
    </source>
</evidence>
<evidence type="ECO:0000305" key="4"/>
<sequence length="424" mass="48419">MEKQCCSHPVICSLSTMYTFLLGAIFIALSSSRILLVKYSANEENKYDYLPTTANVCSELVKLVFCVLVSFCVIKKDHQSRNLKYASWKEFSNFMKWSIPAFLYFLDNLIVFYVLSYLQPAMAVIFSNFSIITTALLFRIVLKRRLNWIQWASLLILFLSIVALTAGTKTLQHNLAGHGFHHDAFFSPSNSCLLFRSECPRKDNCTAKEWTFPEAKWNTTARVFSHIRLGMGHVLIIVQCFISSMANIYNEKILKEGNQLAESIFIQNSKLYFFGILFNGLTLGLQRSNRDQIKNCGFFYGHNAFSVALIFVTAFQGLSVAFILKFLDNMFHVLMAQVTTVIITTVSVLVFDFRPSLEFFLEAPSVLLSIFIYNASKPQGPEYAPRQERIRDLSGNLWERSSGDGEELERLTKPKSDESDEDTF</sequence>
<feature type="chain" id="PRO_0000309357" description="UDP-sugar transporter protein SLC35A5">
    <location>
        <begin position="1"/>
        <end position="424"/>
    </location>
</feature>
<feature type="topological domain" description="Cytoplasmic" evidence="4">
    <location>
        <begin position="1"/>
        <end position="8"/>
    </location>
</feature>
<feature type="transmembrane region" description="Helical" evidence="2">
    <location>
        <begin position="9"/>
        <end position="29"/>
    </location>
</feature>
<feature type="topological domain" description="Lumenal" evidence="4">
    <location>
        <begin position="30"/>
        <end position="53"/>
    </location>
</feature>
<feature type="transmembrane region" description="Helical" evidence="2">
    <location>
        <begin position="54"/>
        <end position="74"/>
    </location>
</feature>
<feature type="topological domain" description="Cytoplasmic" evidence="4">
    <location>
        <begin position="75"/>
        <end position="93"/>
    </location>
</feature>
<feature type="transmembrane region" description="Helical" evidence="2">
    <location>
        <begin position="94"/>
        <end position="116"/>
    </location>
</feature>
<feature type="topological domain" description="Lumenal" evidence="4">
    <location>
        <begin position="117"/>
        <end position="119"/>
    </location>
</feature>
<feature type="transmembrane region" description="Helical" evidence="2">
    <location>
        <begin position="120"/>
        <end position="142"/>
    </location>
</feature>
<feature type="topological domain" description="Cytoplasmic" evidence="4">
    <location>
        <begin position="143"/>
        <end position="147"/>
    </location>
</feature>
<feature type="transmembrane region" description="Helical" evidence="2">
    <location>
        <begin position="148"/>
        <end position="168"/>
    </location>
</feature>
<feature type="topological domain" description="Lumenal" evidence="4">
    <location>
        <begin position="169"/>
        <end position="228"/>
    </location>
</feature>
<feature type="transmembrane region" description="Helical" evidence="2">
    <location>
        <begin position="229"/>
        <end position="249"/>
    </location>
</feature>
<feature type="topological domain" description="Cytoplasmic" evidence="4">
    <location>
        <begin position="250"/>
        <end position="263"/>
    </location>
</feature>
<feature type="transmembrane region" description="Helical" evidence="2">
    <location>
        <begin position="264"/>
        <end position="284"/>
    </location>
</feature>
<feature type="topological domain" description="Lumenal" evidence="4">
    <location>
        <begin position="285"/>
        <end position="303"/>
    </location>
</feature>
<feature type="transmembrane region" description="Helical" evidence="2">
    <location>
        <begin position="304"/>
        <end position="324"/>
    </location>
</feature>
<feature type="topological domain" description="Cytoplasmic" evidence="4">
    <location>
        <begin position="325"/>
        <end position="330"/>
    </location>
</feature>
<feature type="transmembrane region" description="Helical" evidence="2">
    <location>
        <begin position="331"/>
        <end position="351"/>
    </location>
</feature>
<feature type="topological domain" description="Lumenal" evidence="4">
    <location>
        <begin position="352"/>
        <end position="354"/>
    </location>
</feature>
<feature type="transmembrane region" description="Helical" evidence="2">
    <location>
        <begin position="355"/>
        <end position="375"/>
    </location>
</feature>
<feature type="topological domain" description="Cytoplasmic" evidence="4">
    <location>
        <begin position="376"/>
        <end position="424"/>
    </location>
</feature>
<feature type="region of interest" description="Disordered" evidence="3">
    <location>
        <begin position="395"/>
        <end position="424"/>
    </location>
</feature>
<feature type="compositionally biased region" description="Basic and acidic residues" evidence="3">
    <location>
        <begin position="408"/>
        <end position="417"/>
    </location>
</feature>
<feature type="modified residue" description="Phosphoserine" evidence="1">
    <location>
        <position position="394"/>
    </location>
</feature>
<feature type="modified residue" description="Phosphoserine" evidence="1">
    <location>
        <position position="416"/>
    </location>
</feature>
<feature type="modified residue" description="Phosphoserine" evidence="1">
    <location>
        <position position="419"/>
    </location>
</feature>
<feature type="glycosylation site" description="N-linked (GlcNAc...) asparagine" evidence="2">
    <location>
        <position position="204"/>
    </location>
</feature>
<gene>
    <name evidence="1" type="primary">SLC35A5</name>
</gene>